<sequence length="213" mass="23321">MQAYQRDFIRFAIERGVLRFGEFTLKSGRTSPYFFNAGLFDSGLALARLGRFYAEAVIDSGIDFDVLFGPAYKGIPLAATTAVALAEQHQRDLPWCFNRKEAKDHGEGGTLVGAPLSGRVLIIDDVITAGTAIREVMQIIDAQGARAAGVLIALNRQERGKGELSAIQEVERDFGMPVVSIVSLEQVLEYLAEDAELKKHLPAVEAYRAQYGI</sequence>
<evidence type="ECO:0000255" key="1">
    <source>
        <dbReference type="HAMAP-Rule" id="MF_01208"/>
    </source>
</evidence>
<evidence type="ECO:0000305" key="2"/>
<name>PYRE_PSEAE</name>
<keyword id="KW-0328">Glycosyltransferase</keyword>
<keyword id="KW-0460">Magnesium</keyword>
<keyword id="KW-0665">Pyrimidine biosynthesis</keyword>
<keyword id="KW-1185">Reference proteome</keyword>
<keyword id="KW-0808">Transferase</keyword>
<accession>P50587</accession>
<proteinExistence type="inferred from homology"/>
<feature type="chain" id="PRO_0000110724" description="Orotate phosphoribosyltransferase">
    <location>
        <begin position="1"/>
        <end position="213"/>
    </location>
</feature>
<feature type="binding site" description="in other chain" evidence="1">
    <location>
        <position position="26"/>
    </location>
    <ligand>
        <name>5-phospho-alpha-D-ribose 1-diphosphate</name>
        <dbReference type="ChEBI" id="CHEBI:58017"/>
        <note>ligand shared between dimeric partners</note>
    </ligand>
</feature>
<feature type="binding site" evidence="1">
    <location>
        <begin position="34"/>
        <end position="35"/>
    </location>
    <ligand>
        <name>orotate</name>
        <dbReference type="ChEBI" id="CHEBI:30839"/>
    </ligand>
</feature>
<feature type="binding site" description="in other chain" evidence="1">
    <location>
        <begin position="72"/>
        <end position="73"/>
    </location>
    <ligand>
        <name>5-phospho-alpha-D-ribose 1-diphosphate</name>
        <dbReference type="ChEBI" id="CHEBI:58017"/>
        <note>ligand shared between dimeric partners</note>
    </ligand>
</feature>
<feature type="binding site" evidence="1">
    <location>
        <position position="99"/>
    </location>
    <ligand>
        <name>5-phospho-alpha-D-ribose 1-diphosphate</name>
        <dbReference type="ChEBI" id="CHEBI:58017"/>
        <note>ligand shared between dimeric partners</note>
    </ligand>
</feature>
<feature type="binding site" description="in other chain" evidence="1">
    <location>
        <position position="100"/>
    </location>
    <ligand>
        <name>5-phospho-alpha-D-ribose 1-diphosphate</name>
        <dbReference type="ChEBI" id="CHEBI:58017"/>
        <note>ligand shared between dimeric partners</note>
    </ligand>
</feature>
<feature type="binding site" evidence="1">
    <location>
        <position position="103"/>
    </location>
    <ligand>
        <name>5-phospho-alpha-D-ribose 1-diphosphate</name>
        <dbReference type="ChEBI" id="CHEBI:58017"/>
        <note>ligand shared between dimeric partners</note>
    </ligand>
</feature>
<feature type="binding site" evidence="1">
    <location>
        <position position="105"/>
    </location>
    <ligand>
        <name>5-phospho-alpha-D-ribose 1-diphosphate</name>
        <dbReference type="ChEBI" id="CHEBI:58017"/>
        <note>ligand shared between dimeric partners</note>
    </ligand>
</feature>
<feature type="binding site" description="in other chain" evidence="1">
    <location>
        <begin position="124"/>
        <end position="132"/>
    </location>
    <ligand>
        <name>5-phospho-alpha-D-ribose 1-diphosphate</name>
        <dbReference type="ChEBI" id="CHEBI:58017"/>
        <note>ligand shared between dimeric partners</note>
    </ligand>
</feature>
<feature type="binding site" evidence="1">
    <location>
        <position position="128"/>
    </location>
    <ligand>
        <name>orotate</name>
        <dbReference type="ChEBI" id="CHEBI:30839"/>
    </ligand>
</feature>
<feature type="binding site" evidence="1">
    <location>
        <position position="156"/>
    </location>
    <ligand>
        <name>orotate</name>
        <dbReference type="ChEBI" id="CHEBI:30839"/>
    </ligand>
</feature>
<feature type="sequence conflict" description="In Ref. 1; AAC44427." evidence="2" ref="1">
    <original>D</original>
    <variation>E</variation>
    <location>
        <position position="104"/>
    </location>
</feature>
<dbReference type="EC" id="2.4.2.10" evidence="1"/>
<dbReference type="EMBL" id="U38241">
    <property type="protein sequence ID" value="AAC44427.1"/>
    <property type="molecule type" value="Genomic_DNA"/>
</dbReference>
<dbReference type="EMBL" id="AE004091">
    <property type="protein sequence ID" value="AAG08716.1"/>
    <property type="molecule type" value="Genomic_DNA"/>
</dbReference>
<dbReference type="PIR" id="A82981">
    <property type="entry name" value="A82981"/>
</dbReference>
<dbReference type="RefSeq" id="NP_254018.1">
    <property type="nucleotide sequence ID" value="NC_002516.2"/>
</dbReference>
<dbReference type="RefSeq" id="WP_003096586.1">
    <property type="nucleotide sequence ID" value="NZ_QZGE01000020.1"/>
</dbReference>
<dbReference type="SMR" id="P50587"/>
<dbReference type="FunCoup" id="P50587">
    <property type="interactions" value="614"/>
</dbReference>
<dbReference type="STRING" id="208964.PA5331"/>
<dbReference type="PaxDb" id="208964-PA5331"/>
<dbReference type="DNASU" id="878227"/>
<dbReference type="GeneID" id="878227"/>
<dbReference type="KEGG" id="pae:PA5331"/>
<dbReference type="PATRIC" id="fig|208964.12.peg.5586"/>
<dbReference type="PseudoCAP" id="PA5331"/>
<dbReference type="HOGENOM" id="CLU_074878_0_1_6"/>
<dbReference type="InParanoid" id="P50587"/>
<dbReference type="OrthoDB" id="9779060at2"/>
<dbReference type="PhylomeDB" id="P50587"/>
<dbReference type="BioCyc" id="PAER208964:G1FZ6-5453-MONOMER"/>
<dbReference type="UniPathway" id="UPA00070">
    <property type="reaction ID" value="UER00119"/>
</dbReference>
<dbReference type="Proteomes" id="UP000002438">
    <property type="component" value="Chromosome"/>
</dbReference>
<dbReference type="GO" id="GO:0005737">
    <property type="term" value="C:cytoplasm"/>
    <property type="evidence" value="ECO:0000318"/>
    <property type="project" value="GO_Central"/>
</dbReference>
<dbReference type="GO" id="GO:0000287">
    <property type="term" value="F:magnesium ion binding"/>
    <property type="evidence" value="ECO:0007669"/>
    <property type="project" value="UniProtKB-UniRule"/>
</dbReference>
<dbReference type="GO" id="GO:0004588">
    <property type="term" value="F:orotate phosphoribosyltransferase activity"/>
    <property type="evidence" value="ECO:0000315"/>
    <property type="project" value="PseudoCAP"/>
</dbReference>
<dbReference type="GO" id="GO:0006207">
    <property type="term" value="P:'de novo' pyrimidine nucleobase biosynthetic process"/>
    <property type="evidence" value="ECO:0000318"/>
    <property type="project" value="GO_Central"/>
</dbReference>
<dbReference type="GO" id="GO:0044205">
    <property type="term" value="P:'de novo' UMP biosynthetic process"/>
    <property type="evidence" value="ECO:0007669"/>
    <property type="project" value="UniProtKB-UniRule"/>
</dbReference>
<dbReference type="GO" id="GO:0006221">
    <property type="term" value="P:pyrimidine nucleotide biosynthetic process"/>
    <property type="evidence" value="ECO:0000315"/>
    <property type="project" value="PseudoCAP"/>
</dbReference>
<dbReference type="GO" id="GO:0046132">
    <property type="term" value="P:pyrimidine ribonucleoside biosynthetic process"/>
    <property type="evidence" value="ECO:0000318"/>
    <property type="project" value="GO_Central"/>
</dbReference>
<dbReference type="CDD" id="cd06223">
    <property type="entry name" value="PRTases_typeI"/>
    <property type="match status" value="1"/>
</dbReference>
<dbReference type="FunFam" id="3.40.50.2020:FF:000008">
    <property type="entry name" value="Orotate phosphoribosyltransferase"/>
    <property type="match status" value="1"/>
</dbReference>
<dbReference type="Gene3D" id="3.40.50.2020">
    <property type="match status" value="1"/>
</dbReference>
<dbReference type="HAMAP" id="MF_01208">
    <property type="entry name" value="PyrE"/>
    <property type="match status" value="1"/>
</dbReference>
<dbReference type="InterPro" id="IPR023031">
    <property type="entry name" value="OPRT"/>
</dbReference>
<dbReference type="InterPro" id="IPR004467">
    <property type="entry name" value="Or_phspho_trans_dom"/>
</dbReference>
<dbReference type="InterPro" id="IPR000836">
    <property type="entry name" value="PRibTrfase_dom"/>
</dbReference>
<dbReference type="InterPro" id="IPR029057">
    <property type="entry name" value="PRTase-like"/>
</dbReference>
<dbReference type="NCBIfam" id="TIGR00336">
    <property type="entry name" value="pyrE"/>
    <property type="match status" value="1"/>
</dbReference>
<dbReference type="PANTHER" id="PTHR46683">
    <property type="entry name" value="OROTATE PHOSPHORIBOSYLTRANSFERASE 1-RELATED"/>
    <property type="match status" value="1"/>
</dbReference>
<dbReference type="PANTHER" id="PTHR46683:SF1">
    <property type="entry name" value="OROTATE PHOSPHORIBOSYLTRANSFERASE 1-RELATED"/>
    <property type="match status" value="1"/>
</dbReference>
<dbReference type="Pfam" id="PF00156">
    <property type="entry name" value="Pribosyltran"/>
    <property type="match status" value="1"/>
</dbReference>
<dbReference type="SUPFAM" id="SSF53271">
    <property type="entry name" value="PRTase-like"/>
    <property type="match status" value="1"/>
</dbReference>
<dbReference type="PROSITE" id="PS00103">
    <property type="entry name" value="PUR_PYR_PR_TRANSFER"/>
    <property type="match status" value="1"/>
</dbReference>
<protein>
    <recommendedName>
        <fullName evidence="1">Orotate phosphoribosyltransferase</fullName>
        <shortName evidence="1">OPRT</shortName>
        <shortName evidence="1">OPRTase</shortName>
        <ecNumber evidence="1">2.4.2.10</ecNumber>
    </recommendedName>
</protein>
<gene>
    <name evidence="1" type="primary">pyrE</name>
    <name type="ordered locus">PA5331</name>
</gene>
<organism>
    <name type="scientific">Pseudomonas aeruginosa (strain ATCC 15692 / DSM 22644 / CIP 104116 / JCM 14847 / LMG 12228 / 1C / PRS 101 / PAO1)</name>
    <dbReference type="NCBI Taxonomy" id="208964"/>
    <lineage>
        <taxon>Bacteria</taxon>
        <taxon>Pseudomonadati</taxon>
        <taxon>Pseudomonadota</taxon>
        <taxon>Gammaproteobacteria</taxon>
        <taxon>Pseudomonadales</taxon>
        <taxon>Pseudomonadaceae</taxon>
        <taxon>Pseudomonas</taxon>
    </lineage>
</organism>
<comment type="function">
    <text evidence="1">Catalyzes the transfer of a ribosyl phosphate group from 5-phosphoribose 1-diphosphate to orotate, leading to the formation of orotidine monophosphate (OMP).</text>
</comment>
<comment type="catalytic activity">
    <reaction evidence="1">
        <text>orotidine 5'-phosphate + diphosphate = orotate + 5-phospho-alpha-D-ribose 1-diphosphate</text>
        <dbReference type="Rhea" id="RHEA:10380"/>
        <dbReference type="ChEBI" id="CHEBI:30839"/>
        <dbReference type="ChEBI" id="CHEBI:33019"/>
        <dbReference type="ChEBI" id="CHEBI:57538"/>
        <dbReference type="ChEBI" id="CHEBI:58017"/>
        <dbReference type="EC" id="2.4.2.10"/>
    </reaction>
</comment>
<comment type="cofactor">
    <cofactor evidence="1">
        <name>Mg(2+)</name>
        <dbReference type="ChEBI" id="CHEBI:18420"/>
    </cofactor>
</comment>
<comment type="pathway">
    <text evidence="1">Pyrimidine metabolism; UMP biosynthesis via de novo pathway; UMP from orotate: step 1/2.</text>
</comment>
<comment type="subunit">
    <text evidence="1">Homodimer.</text>
</comment>
<comment type="similarity">
    <text evidence="1">Belongs to the purine/pyrimidine phosphoribosyltransferase family. PyrE subfamily.</text>
</comment>
<reference key="1">
    <citation type="journal article" date="1996" name="J. Bacteriol.">
        <title>The nucleotide sequence of the Pseudomonas aeruginosa pyrE-crc-rph region and the purification of the crc gene product.</title>
        <authorList>
            <person name="Macgregor C.H."/>
            <person name="Arora S.K."/>
            <person name="Hager P.W."/>
            <person name="Dail M.B."/>
            <person name="Phibbs P.V. Jr."/>
        </authorList>
    </citation>
    <scope>NUCLEOTIDE SEQUENCE [GENOMIC DNA]</scope>
    <source>
        <strain>ATCC 15692 / DSM 22644 / CIP 104116 / JCM 14847 / LMG 12228 / 1C / PRS 101 / PAO1</strain>
    </source>
</reference>
<reference key="2">
    <citation type="journal article" date="2000" name="Nature">
        <title>Complete genome sequence of Pseudomonas aeruginosa PAO1, an opportunistic pathogen.</title>
        <authorList>
            <person name="Stover C.K."/>
            <person name="Pham X.-Q.T."/>
            <person name="Erwin A.L."/>
            <person name="Mizoguchi S.D."/>
            <person name="Warrener P."/>
            <person name="Hickey M.J."/>
            <person name="Brinkman F.S.L."/>
            <person name="Hufnagle W.O."/>
            <person name="Kowalik D.J."/>
            <person name="Lagrou M."/>
            <person name="Garber R.L."/>
            <person name="Goltry L."/>
            <person name="Tolentino E."/>
            <person name="Westbrock-Wadman S."/>
            <person name="Yuan Y."/>
            <person name="Brody L.L."/>
            <person name="Coulter S.N."/>
            <person name="Folger K.R."/>
            <person name="Kas A."/>
            <person name="Larbig K."/>
            <person name="Lim R.M."/>
            <person name="Smith K.A."/>
            <person name="Spencer D.H."/>
            <person name="Wong G.K.-S."/>
            <person name="Wu Z."/>
            <person name="Paulsen I.T."/>
            <person name="Reizer J."/>
            <person name="Saier M.H. Jr."/>
            <person name="Hancock R.E.W."/>
            <person name="Lory S."/>
            <person name="Olson M.V."/>
        </authorList>
    </citation>
    <scope>NUCLEOTIDE SEQUENCE [LARGE SCALE GENOMIC DNA]</scope>
    <source>
        <strain>ATCC 15692 / DSM 22644 / CIP 104116 / JCM 14847 / LMG 12228 / 1C / PRS 101 / PAO1</strain>
    </source>
</reference>